<dbReference type="EMBL" id="CP000477">
    <property type="protein sequence ID" value="ABK13836.1"/>
    <property type="status" value="ALT_INIT"/>
    <property type="molecule type" value="Genomic_DNA"/>
</dbReference>
<dbReference type="SMR" id="A0B562"/>
<dbReference type="STRING" id="349307.Mthe_0033"/>
<dbReference type="KEGG" id="mtp:Mthe_0033"/>
<dbReference type="HOGENOM" id="CLU_115574_0_1_2"/>
<dbReference type="Proteomes" id="UP000000674">
    <property type="component" value="Chromosome"/>
</dbReference>
<dbReference type="GO" id="GO:0015935">
    <property type="term" value="C:small ribosomal subunit"/>
    <property type="evidence" value="ECO:0007669"/>
    <property type="project" value="InterPro"/>
</dbReference>
<dbReference type="GO" id="GO:0019843">
    <property type="term" value="F:rRNA binding"/>
    <property type="evidence" value="ECO:0007669"/>
    <property type="project" value="UniProtKB-UniRule"/>
</dbReference>
<dbReference type="GO" id="GO:0003735">
    <property type="term" value="F:structural constituent of ribosome"/>
    <property type="evidence" value="ECO:0007669"/>
    <property type="project" value="InterPro"/>
</dbReference>
<dbReference type="GO" id="GO:0006412">
    <property type="term" value="P:translation"/>
    <property type="evidence" value="ECO:0007669"/>
    <property type="project" value="UniProtKB-UniRule"/>
</dbReference>
<dbReference type="CDD" id="cd03367">
    <property type="entry name" value="Ribosomal_S23"/>
    <property type="match status" value="1"/>
</dbReference>
<dbReference type="FunFam" id="2.40.50.140:FF:000007">
    <property type="entry name" value="40S ribosomal protein S23"/>
    <property type="match status" value="1"/>
</dbReference>
<dbReference type="Gene3D" id="2.40.50.140">
    <property type="entry name" value="Nucleic acid-binding proteins"/>
    <property type="match status" value="1"/>
</dbReference>
<dbReference type="HAMAP" id="MF_00403_A">
    <property type="entry name" value="Ribosomal_uS12_A"/>
    <property type="match status" value="1"/>
</dbReference>
<dbReference type="InterPro" id="IPR012340">
    <property type="entry name" value="NA-bd_OB-fold"/>
</dbReference>
<dbReference type="InterPro" id="IPR006032">
    <property type="entry name" value="Ribosomal_uS12"/>
</dbReference>
<dbReference type="InterPro" id="IPR022863">
    <property type="entry name" value="Ribosomal_uS12_arc"/>
</dbReference>
<dbReference type="InterPro" id="IPR005680">
    <property type="entry name" value="Ribosomal_uS12_euk/arc"/>
</dbReference>
<dbReference type="NCBIfam" id="NF003254">
    <property type="entry name" value="PRK04211.1"/>
    <property type="match status" value="1"/>
</dbReference>
<dbReference type="NCBIfam" id="TIGR00982">
    <property type="entry name" value="uS12_E_A"/>
    <property type="match status" value="1"/>
</dbReference>
<dbReference type="PANTHER" id="PTHR11652">
    <property type="entry name" value="30S RIBOSOMAL PROTEIN S12 FAMILY MEMBER"/>
    <property type="match status" value="1"/>
</dbReference>
<dbReference type="Pfam" id="PF00164">
    <property type="entry name" value="Ribosom_S12_S23"/>
    <property type="match status" value="1"/>
</dbReference>
<dbReference type="PIRSF" id="PIRSF002133">
    <property type="entry name" value="Ribosomal_S12/S23"/>
    <property type="match status" value="1"/>
</dbReference>
<dbReference type="SUPFAM" id="SSF50249">
    <property type="entry name" value="Nucleic acid-binding proteins"/>
    <property type="match status" value="1"/>
</dbReference>
<dbReference type="PROSITE" id="PS00055">
    <property type="entry name" value="RIBOSOMAL_S12"/>
    <property type="match status" value="1"/>
</dbReference>
<reference key="1">
    <citation type="submission" date="2006-10" db="EMBL/GenBank/DDBJ databases">
        <title>Complete sequence of Methanosaeta thermophila PT.</title>
        <authorList>
            <consortium name="US DOE Joint Genome Institute"/>
            <person name="Copeland A."/>
            <person name="Lucas S."/>
            <person name="Lapidus A."/>
            <person name="Barry K."/>
            <person name="Detter J.C."/>
            <person name="Glavina del Rio T."/>
            <person name="Hammon N."/>
            <person name="Israni S."/>
            <person name="Pitluck S."/>
            <person name="Chain P."/>
            <person name="Malfatti S."/>
            <person name="Shin M."/>
            <person name="Vergez L."/>
            <person name="Schmutz J."/>
            <person name="Larimer F."/>
            <person name="Land M."/>
            <person name="Hauser L."/>
            <person name="Kyrpides N."/>
            <person name="Kim E."/>
            <person name="Smith K.S."/>
            <person name="Ingram-Smith C."/>
            <person name="Richardson P."/>
        </authorList>
    </citation>
    <scope>NUCLEOTIDE SEQUENCE [LARGE SCALE GENOMIC DNA]</scope>
    <source>
        <strain>DSM 6194 / JCM 14653 / NBRC 101360 / PT</strain>
    </source>
</reference>
<gene>
    <name evidence="1" type="primary">rps12</name>
    <name type="ordered locus">Mthe_0033</name>
</gene>
<keyword id="KW-1185">Reference proteome</keyword>
<keyword id="KW-0687">Ribonucleoprotein</keyword>
<keyword id="KW-0689">Ribosomal protein</keyword>
<keyword id="KW-0694">RNA-binding</keyword>
<keyword id="KW-0699">rRNA-binding</keyword>
<name>RS12_METTP</name>
<feature type="chain" id="PRO_0000296050" description="Small ribosomal subunit protein uS12">
    <location>
        <begin position="1"/>
        <end position="142"/>
    </location>
</feature>
<organism>
    <name type="scientific">Methanothrix thermoacetophila (strain DSM 6194 / JCM 14653 / NBRC 101360 / PT)</name>
    <name type="common">Methanosaeta thermophila</name>
    <dbReference type="NCBI Taxonomy" id="349307"/>
    <lineage>
        <taxon>Archaea</taxon>
        <taxon>Methanobacteriati</taxon>
        <taxon>Methanobacteriota</taxon>
        <taxon>Stenosarchaea group</taxon>
        <taxon>Methanomicrobia</taxon>
        <taxon>Methanotrichales</taxon>
        <taxon>Methanotrichaceae</taxon>
        <taxon>Methanothrix</taxon>
    </lineage>
</organism>
<proteinExistence type="inferred from homology"/>
<sequence length="142" mass="15689">MPMGINAARKMEDDWKKLRWSDPHYCRRALGLKVKADPLGGAPRARGIVLEKVGVEAKQPNSAIRKCVRIQLIKNGRQVTAFCPGDGAIGFIDEHDEVVVERIGGRMGRSMGDIPGVRFKVVAVNNVSLEEMVSGRKEKPVR</sequence>
<accession>A0B562</accession>
<protein>
    <recommendedName>
        <fullName evidence="1">Small ribosomal subunit protein uS12</fullName>
    </recommendedName>
    <alternativeName>
        <fullName evidence="2">30S ribosomal protein S12</fullName>
    </alternativeName>
</protein>
<evidence type="ECO:0000255" key="1">
    <source>
        <dbReference type="HAMAP-Rule" id="MF_00403"/>
    </source>
</evidence>
<evidence type="ECO:0000305" key="2"/>
<comment type="function">
    <text evidence="1">With S4 and S5 plays an important role in translational accuracy. Located at the interface of the 30S and 50S subunits.</text>
</comment>
<comment type="subunit">
    <text evidence="1">Part of the 30S ribosomal subunit.</text>
</comment>
<comment type="similarity">
    <text evidence="1">Belongs to the universal ribosomal protein uS12 family.</text>
</comment>
<comment type="sequence caution" evidence="2">
    <conflict type="erroneous initiation">
        <sequence resource="EMBL-CDS" id="ABK13836"/>
    </conflict>
    <text>Truncated N-terminus.</text>
</comment>